<keyword id="KW-0067">ATP-binding</keyword>
<keyword id="KW-0143">Chaperone</keyword>
<keyword id="KW-0235">DNA replication</keyword>
<keyword id="KW-0547">Nucleotide-binding</keyword>
<keyword id="KW-0597">Phosphoprotein</keyword>
<keyword id="KW-1185">Reference proteome</keyword>
<keyword id="KW-0346">Stress response</keyword>
<sequence>MGKIIGIDLGTTNSCVAIMDGTQARVLENAEGDRTTPSIIAYTQDGETLVGQPAKRQAVTNPQNTLFAIKRLIGRRFQDEEVQRDVSIMPYKIIGADNGDAWLDVKGQKMAPPQISAEVLKKMKKTAEDYLGEPVTEAVITVPAYFNDAQRQATKDAGRIAGLEVKRIINEPTAAALAYGLDKEVGNRTIAVYDLGGGTFDISIIEIDEVDGEKTFEVLATNGDTHLGGEDFDTRLINYLVDEFKKDQGIDLRNDPLAMQRLKEAAEKAKIELSSAQQTDVNLPYITADATGPKHMNIKVTRAKLESLVEDLVNRSIEPLKVALQDAGLSVSDINDVILVGGQTRMPMVQKKVAEFFGKEPRKDVNPDEAVAIGAAVQGGVLTGDVKDVLLLDVTPLSLGIETMGGVMTPLITKNTTIPTKHSQVFSTAEDNQSAVTIHVLQGERKRASDNKSLGQFNLDGINPAPRGMPQIEVTFDIDADGILHVSAKDKNSGKEQKITIKASSGLNEEEIQKMVRDAEANAESDRKFEELVQTRNQGDHLLHSTRKQVEEAGDKLPADDKTAIESALNALETALKGEDKAAIEAKMQELAQVSQKLMEIAQQQHAQQQAGSADASANNAKDDDVVDAEFEEVKDKK</sequence>
<evidence type="ECO:0000250" key="1">
    <source>
        <dbReference type="UniProtKB" id="P0A6Y8"/>
    </source>
</evidence>
<evidence type="ECO:0000255" key="2">
    <source>
        <dbReference type="HAMAP-Rule" id="MF_00332"/>
    </source>
</evidence>
<evidence type="ECO:0000256" key="3">
    <source>
        <dbReference type="SAM" id="MobiDB-lite"/>
    </source>
</evidence>
<evidence type="ECO:0000269" key="4">
    <source>
    </source>
</evidence>
<dbReference type="EMBL" id="U58360">
    <property type="protein sequence ID" value="AAB02910.1"/>
    <property type="molecule type" value="Genomic_DNA"/>
</dbReference>
<dbReference type="EMBL" id="AE006468">
    <property type="protein sequence ID" value="AAL18976.1"/>
    <property type="molecule type" value="Genomic_DNA"/>
</dbReference>
<dbReference type="RefSeq" id="NP_459017.1">
    <property type="nucleotide sequence ID" value="NC_003197.2"/>
</dbReference>
<dbReference type="RefSeq" id="WP_000516125.1">
    <property type="nucleotide sequence ID" value="NC_003197.2"/>
</dbReference>
<dbReference type="SMR" id="Q56073"/>
<dbReference type="STRING" id="99287.STM0012"/>
<dbReference type="PaxDb" id="99287-STM0012"/>
<dbReference type="GeneID" id="1251530"/>
<dbReference type="KEGG" id="stm:STM0012"/>
<dbReference type="PATRIC" id="fig|99287.12.peg.12"/>
<dbReference type="HOGENOM" id="CLU_005965_2_1_6"/>
<dbReference type="OMA" id="MGTDWKI"/>
<dbReference type="PhylomeDB" id="Q56073"/>
<dbReference type="BioCyc" id="SENT99287:STM0012-MONOMER"/>
<dbReference type="Proteomes" id="UP000001014">
    <property type="component" value="Chromosome"/>
</dbReference>
<dbReference type="GO" id="GO:0005829">
    <property type="term" value="C:cytosol"/>
    <property type="evidence" value="ECO:0000318"/>
    <property type="project" value="GO_Central"/>
</dbReference>
<dbReference type="GO" id="GO:0005524">
    <property type="term" value="F:ATP binding"/>
    <property type="evidence" value="ECO:0007669"/>
    <property type="project" value="UniProtKB-UniRule"/>
</dbReference>
<dbReference type="GO" id="GO:0016887">
    <property type="term" value="F:ATP hydrolysis activity"/>
    <property type="evidence" value="ECO:0000318"/>
    <property type="project" value="GO_Central"/>
</dbReference>
<dbReference type="GO" id="GO:0140662">
    <property type="term" value="F:ATP-dependent protein folding chaperone"/>
    <property type="evidence" value="ECO:0007669"/>
    <property type="project" value="InterPro"/>
</dbReference>
<dbReference type="GO" id="GO:0031072">
    <property type="term" value="F:heat shock protein binding"/>
    <property type="evidence" value="ECO:0000318"/>
    <property type="project" value="GO_Central"/>
</dbReference>
<dbReference type="GO" id="GO:0044183">
    <property type="term" value="F:protein folding chaperone"/>
    <property type="evidence" value="ECO:0000318"/>
    <property type="project" value="GO_Central"/>
</dbReference>
<dbReference type="GO" id="GO:0051082">
    <property type="term" value="F:unfolded protein binding"/>
    <property type="evidence" value="ECO:0007669"/>
    <property type="project" value="InterPro"/>
</dbReference>
<dbReference type="GO" id="GO:0051085">
    <property type="term" value="P:chaperone cofactor-dependent protein refolding"/>
    <property type="evidence" value="ECO:0000318"/>
    <property type="project" value="GO_Central"/>
</dbReference>
<dbReference type="GO" id="GO:0006260">
    <property type="term" value="P:DNA replication"/>
    <property type="evidence" value="ECO:0007669"/>
    <property type="project" value="UniProtKB-KW"/>
</dbReference>
<dbReference type="GO" id="GO:0042026">
    <property type="term" value="P:protein refolding"/>
    <property type="evidence" value="ECO:0000318"/>
    <property type="project" value="GO_Central"/>
</dbReference>
<dbReference type="CDD" id="cd10234">
    <property type="entry name" value="ASKHA_NBD_HSP70_DnaK-like"/>
    <property type="match status" value="1"/>
</dbReference>
<dbReference type="FunFam" id="2.60.34.10:FF:000014">
    <property type="entry name" value="Chaperone protein DnaK HSP70"/>
    <property type="match status" value="1"/>
</dbReference>
<dbReference type="FunFam" id="3.30.30.30:FF:000003">
    <property type="entry name" value="Heat shock protein 9"/>
    <property type="match status" value="1"/>
</dbReference>
<dbReference type="FunFam" id="1.20.1270.10:FF:000001">
    <property type="entry name" value="Molecular chaperone DnaK"/>
    <property type="match status" value="1"/>
</dbReference>
<dbReference type="FunFam" id="3.30.420.40:FF:000004">
    <property type="entry name" value="Molecular chaperone DnaK"/>
    <property type="match status" value="1"/>
</dbReference>
<dbReference type="FunFam" id="3.90.640.10:FF:000003">
    <property type="entry name" value="Molecular chaperone DnaK"/>
    <property type="match status" value="1"/>
</dbReference>
<dbReference type="Gene3D" id="1.20.1270.10">
    <property type="match status" value="1"/>
</dbReference>
<dbReference type="Gene3D" id="3.30.420.40">
    <property type="match status" value="2"/>
</dbReference>
<dbReference type="Gene3D" id="3.90.640.10">
    <property type="entry name" value="Actin, Chain A, domain 4"/>
    <property type="match status" value="1"/>
</dbReference>
<dbReference type="Gene3D" id="2.60.34.10">
    <property type="entry name" value="Substrate Binding Domain Of DNAk, Chain A, domain 1"/>
    <property type="match status" value="1"/>
</dbReference>
<dbReference type="HAMAP" id="MF_00332">
    <property type="entry name" value="DnaK"/>
    <property type="match status" value="1"/>
</dbReference>
<dbReference type="InterPro" id="IPR043129">
    <property type="entry name" value="ATPase_NBD"/>
</dbReference>
<dbReference type="InterPro" id="IPR012725">
    <property type="entry name" value="Chaperone_DnaK"/>
</dbReference>
<dbReference type="InterPro" id="IPR018181">
    <property type="entry name" value="Heat_shock_70_CS"/>
</dbReference>
<dbReference type="InterPro" id="IPR029048">
    <property type="entry name" value="HSP70_C_sf"/>
</dbReference>
<dbReference type="InterPro" id="IPR029047">
    <property type="entry name" value="HSP70_peptide-bd_sf"/>
</dbReference>
<dbReference type="InterPro" id="IPR013126">
    <property type="entry name" value="Hsp_70_fam"/>
</dbReference>
<dbReference type="NCBIfam" id="NF001413">
    <property type="entry name" value="PRK00290.1"/>
    <property type="match status" value="1"/>
</dbReference>
<dbReference type="NCBIfam" id="NF003520">
    <property type="entry name" value="PRK05183.1"/>
    <property type="match status" value="1"/>
</dbReference>
<dbReference type="NCBIfam" id="TIGR02350">
    <property type="entry name" value="prok_dnaK"/>
    <property type="match status" value="1"/>
</dbReference>
<dbReference type="PANTHER" id="PTHR19375">
    <property type="entry name" value="HEAT SHOCK PROTEIN 70KDA"/>
    <property type="match status" value="1"/>
</dbReference>
<dbReference type="Pfam" id="PF00012">
    <property type="entry name" value="HSP70"/>
    <property type="match status" value="1"/>
</dbReference>
<dbReference type="PRINTS" id="PR00301">
    <property type="entry name" value="HEATSHOCK70"/>
</dbReference>
<dbReference type="SUPFAM" id="SSF53067">
    <property type="entry name" value="Actin-like ATPase domain"/>
    <property type="match status" value="2"/>
</dbReference>
<dbReference type="SUPFAM" id="SSF100934">
    <property type="entry name" value="Heat shock protein 70kD (HSP70), C-terminal subdomain"/>
    <property type="match status" value="1"/>
</dbReference>
<dbReference type="SUPFAM" id="SSF100920">
    <property type="entry name" value="Heat shock protein 70kD (HSP70), peptide-binding domain"/>
    <property type="match status" value="1"/>
</dbReference>
<dbReference type="PROSITE" id="PS00297">
    <property type="entry name" value="HSP70_1"/>
    <property type="match status" value="1"/>
</dbReference>
<dbReference type="PROSITE" id="PS00329">
    <property type="entry name" value="HSP70_2"/>
    <property type="match status" value="1"/>
</dbReference>
<dbReference type="PROSITE" id="PS01036">
    <property type="entry name" value="HSP70_3"/>
    <property type="match status" value="1"/>
</dbReference>
<reference key="1">
    <citation type="submission" date="1996-06" db="EMBL/GenBank/DDBJ databases">
        <authorList>
            <person name="Stephen R.J."/>
            <person name="Hinton J.C.D."/>
        </authorList>
    </citation>
    <scope>NUCLEOTIDE SEQUENCE [GENOMIC DNA]</scope>
    <source>
        <strain>LT2</strain>
    </source>
</reference>
<reference key="2">
    <citation type="journal article" date="2001" name="Nature">
        <title>Complete genome sequence of Salmonella enterica serovar Typhimurium LT2.</title>
        <authorList>
            <person name="McClelland M."/>
            <person name="Sanderson K.E."/>
            <person name="Spieth J."/>
            <person name="Clifton S.W."/>
            <person name="Latreille P."/>
            <person name="Courtney L."/>
            <person name="Porwollik S."/>
            <person name="Ali J."/>
            <person name="Dante M."/>
            <person name="Du F."/>
            <person name="Hou S."/>
            <person name="Layman D."/>
            <person name="Leonard S."/>
            <person name="Nguyen C."/>
            <person name="Scott K."/>
            <person name="Holmes A."/>
            <person name="Grewal N."/>
            <person name="Mulvaney E."/>
            <person name="Ryan E."/>
            <person name="Sun H."/>
            <person name="Florea L."/>
            <person name="Miller W."/>
            <person name="Stoneking T."/>
            <person name="Nhan M."/>
            <person name="Waterston R."/>
            <person name="Wilson R.K."/>
        </authorList>
    </citation>
    <scope>NUCLEOTIDE SEQUENCE [LARGE SCALE GENOMIC DNA]</scope>
    <source>
        <strain>LT2 / SGSC1412 / ATCC 700720</strain>
    </source>
</reference>
<reference key="3">
    <citation type="journal article" date="2020" name="Cell Rep.">
        <title>The YdiU Domain Modulates Bacterial Stress Signaling through Mn2+-Dependent UMPylation.</title>
        <authorList>
            <person name="Yang Y."/>
            <person name="Yue Y."/>
            <person name="Song N."/>
            <person name="Li C."/>
            <person name="Yuan Z."/>
            <person name="Wang Y."/>
            <person name="Ma Y."/>
            <person name="Li H."/>
            <person name="Zhang F."/>
            <person name="Wang W."/>
            <person name="Jia H."/>
            <person name="Li P."/>
            <person name="Li X."/>
            <person name="Wang Q."/>
            <person name="Ding Z."/>
            <person name="Dong H."/>
            <person name="Gu L."/>
            <person name="Li B."/>
        </authorList>
    </citation>
    <scope>ACTIVITY REGULATION</scope>
    <scope>URIDYLYLATION</scope>
    <source>
        <strain>ATCC 14028 / SGSC 2980 / CDC 6516-60 / NCTC 12023</strain>
    </source>
</reference>
<proteinExistence type="inferred from homology"/>
<name>DNAK_SALTY</name>
<feature type="chain" id="PRO_0000078533" description="Chaperone protein DnaK">
    <location>
        <begin position="1"/>
        <end position="638"/>
    </location>
</feature>
<feature type="region of interest" description="Disordered" evidence="3">
    <location>
        <begin position="603"/>
        <end position="638"/>
    </location>
</feature>
<feature type="compositionally biased region" description="Low complexity" evidence="3">
    <location>
        <begin position="603"/>
        <end position="620"/>
    </location>
</feature>
<feature type="modified residue" description="Phosphothreonine; by autocatalysis" evidence="2">
    <location>
        <position position="199"/>
    </location>
</feature>
<accession>Q56073</accession>
<gene>
    <name evidence="2" type="primary">dnaK</name>
    <name type="ordered locus">STM0012</name>
</gene>
<organism>
    <name type="scientific">Salmonella typhimurium (strain LT2 / SGSC1412 / ATCC 700720)</name>
    <dbReference type="NCBI Taxonomy" id="99287"/>
    <lineage>
        <taxon>Bacteria</taxon>
        <taxon>Pseudomonadati</taxon>
        <taxon>Pseudomonadota</taxon>
        <taxon>Gammaproteobacteria</taxon>
        <taxon>Enterobacterales</taxon>
        <taxon>Enterobacteriaceae</taxon>
        <taxon>Salmonella</taxon>
    </lineage>
</organism>
<comment type="function">
    <text evidence="2">Acts as a chaperone.</text>
</comment>
<comment type="activity regulation">
    <text evidence="4">UMPylation of the chaperone by YdiU negatively regulates its activity, facilitating Salmonella survival under ATP-limited conditions.</text>
</comment>
<comment type="induction">
    <text evidence="2">By stress conditions e.g. heat shock.</text>
</comment>
<comment type="PTM">
    <text evidence="1">Autophosphorylated; GrpE inhibits the autophosphorylation.</text>
</comment>
<comment type="PTM">
    <text evidence="4">UMPylated on a tyrosine residue by YdiU under ATP-limited conditions.</text>
</comment>
<comment type="similarity">
    <text evidence="2">Belongs to the heat shock protein 70 family.</text>
</comment>
<protein>
    <recommendedName>
        <fullName evidence="2">Chaperone protein DnaK</fullName>
    </recommendedName>
    <alternativeName>
        <fullName evidence="2">HSP70</fullName>
    </alternativeName>
    <alternativeName>
        <fullName evidence="2">Heat shock 70 kDa protein</fullName>
    </alternativeName>
    <alternativeName>
        <fullName evidence="2">Heat shock protein 70</fullName>
    </alternativeName>
</protein>